<dbReference type="EMBL" id="AE014075">
    <property type="protein sequence ID" value="AAN81503.1"/>
    <property type="status" value="ALT_INIT"/>
    <property type="molecule type" value="Genomic_DNA"/>
</dbReference>
<dbReference type="RefSeq" id="WP_000028953.1">
    <property type="nucleotide sequence ID" value="NZ_CP051263.1"/>
</dbReference>
<dbReference type="SMR" id="P0AAC9"/>
<dbReference type="STRING" id="199310.c3053"/>
<dbReference type="GeneID" id="93774608"/>
<dbReference type="KEGG" id="ecc:c3053"/>
<dbReference type="eggNOG" id="COG0316">
    <property type="taxonomic scope" value="Bacteria"/>
</dbReference>
<dbReference type="HOGENOM" id="CLU_069054_5_1_6"/>
<dbReference type="Proteomes" id="UP000001410">
    <property type="component" value="Chromosome"/>
</dbReference>
<dbReference type="GO" id="GO:0005829">
    <property type="term" value="C:cytosol"/>
    <property type="evidence" value="ECO:0007669"/>
    <property type="project" value="TreeGrafter"/>
</dbReference>
<dbReference type="GO" id="GO:0051537">
    <property type="term" value="F:2 iron, 2 sulfur cluster binding"/>
    <property type="evidence" value="ECO:0007669"/>
    <property type="project" value="UniProtKB-ARBA"/>
</dbReference>
<dbReference type="GO" id="GO:0005506">
    <property type="term" value="F:iron ion binding"/>
    <property type="evidence" value="ECO:0007669"/>
    <property type="project" value="UniProtKB-UniRule"/>
</dbReference>
<dbReference type="GO" id="GO:0016226">
    <property type="term" value="P:iron-sulfur cluster assembly"/>
    <property type="evidence" value="ECO:0007669"/>
    <property type="project" value="UniProtKB-UniRule"/>
</dbReference>
<dbReference type="FunFam" id="2.60.300.12:FF:000001">
    <property type="entry name" value="Iron-binding protein IscA"/>
    <property type="match status" value="1"/>
</dbReference>
<dbReference type="Gene3D" id="2.60.300.12">
    <property type="entry name" value="HesB-like domain"/>
    <property type="match status" value="1"/>
</dbReference>
<dbReference type="HAMAP" id="MF_01429">
    <property type="entry name" value="Fe_S_insert_IscA"/>
    <property type="match status" value="1"/>
</dbReference>
<dbReference type="InterPro" id="IPR050322">
    <property type="entry name" value="Fe-S_cluster_asmbl/transfer"/>
</dbReference>
<dbReference type="InterPro" id="IPR000361">
    <property type="entry name" value="FeS_biogenesis"/>
</dbReference>
<dbReference type="InterPro" id="IPR016092">
    <property type="entry name" value="FeS_cluster_insertion"/>
</dbReference>
<dbReference type="InterPro" id="IPR017870">
    <property type="entry name" value="FeS_cluster_insertion_CS"/>
</dbReference>
<dbReference type="InterPro" id="IPR035903">
    <property type="entry name" value="HesB-like_dom_sf"/>
</dbReference>
<dbReference type="InterPro" id="IPR011302">
    <property type="entry name" value="IscA_proteobacteria"/>
</dbReference>
<dbReference type="NCBIfam" id="TIGR00049">
    <property type="entry name" value="iron-sulfur cluster assembly accessory protein"/>
    <property type="match status" value="1"/>
</dbReference>
<dbReference type="NCBIfam" id="TIGR02011">
    <property type="entry name" value="IscA"/>
    <property type="match status" value="1"/>
</dbReference>
<dbReference type="NCBIfam" id="NF007049">
    <property type="entry name" value="PRK09502.1"/>
    <property type="match status" value="1"/>
</dbReference>
<dbReference type="PANTHER" id="PTHR10072:SF41">
    <property type="entry name" value="IRON-SULFUR CLUSTER ASSEMBLY 1 HOMOLOG, MITOCHONDRIAL"/>
    <property type="match status" value="1"/>
</dbReference>
<dbReference type="PANTHER" id="PTHR10072">
    <property type="entry name" value="IRON-SULFUR CLUSTER ASSEMBLY PROTEIN"/>
    <property type="match status" value="1"/>
</dbReference>
<dbReference type="Pfam" id="PF01521">
    <property type="entry name" value="Fe-S_biosyn"/>
    <property type="match status" value="1"/>
</dbReference>
<dbReference type="SUPFAM" id="SSF89360">
    <property type="entry name" value="HesB-like domain"/>
    <property type="match status" value="1"/>
</dbReference>
<dbReference type="PROSITE" id="PS01152">
    <property type="entry name" value="HESB"/>
    <property type="match status" value="1"/>
</dbReference>
<name>ISCA_ECOL6</name>
<keyword id="KW-0408">Iron</keyword>
<keyword id="KW-0479">Metal-binding</keyword>
<keyword id="KW-1185">Reference proteome</keyword>
<protein>
    <recommendedName>
        <fullName>Iron-binding protein IscA</fullName>
    </recommendedName>
    <alternativeName>
        <fullName>Iron-sulfur cluster assembly protein</fullName>
    </alternativeName>
</protein>
<comment type="function">
    <text evidence="1">Is able to transfer iron-sulfur clusters to apo-ferredoxin. Multiple cycles of [2Fe2S] cluster formation and transfer are observed, suggesting that IscA acts catalytically. Recruits intracellular free iron so as to provide iron for the assembly of transient iron-sulfur cluster in IscU in the presence of IscS, L-cysteine and the thioredoxin reductase system TrxA/TrxB (By similarity).</text>
</comment>
<comment type="cofactor">
    <cofactor evidence="1">
        <name>Fe cation</name>
        <dbReference type="ChEBI" id="CHEBI:24875"/>
    </cofactor>
    <text evidence="1">Binds 2 iron ions per dimer. The dimer may bind additional iron ions.</text>
</comment>
<comment type="subunit">
    <text evidence="1">Homodimer; may form tetramers and higher multimers.</text>
</comment>
<comment type="similarity">
    <text evidence="2">Belongs to the HesB/IscA family.</text>
</comment>
<comment type="sequence caution" evidence="2">
    <conflict type="erroneous initiation">
        <sequence resource="EMBL-CDS" id="AAN81503"/>
    </conflict>
</comment>
<reference key="1">
    <citation type="journal article" date="2002" name="Proc. Natl. Acad. Sci. U.S.A.">
        <title>Extensive mosaic structure revealed by the complete genome sequence of uropathogenic Escherichia coli.</title>
        <authorList>
            <person name="Welch R.A."/>
            <person name="Burland V."/>
            <person name="Plunkett G. III"/>
            <person name="Redford P."/>
            <person name="Roesch P."/>
            <person name="Rasko D."/>
            <person name="Buckles E.L."/>
            <person name="Liou S.-R."/>
            <person name="Boutin A."/>
            <person name="Hackett J."/>
            <person name="Stroud D."/>
            <person name="Mayhew G.F."/>
            <person name="Rose D.J."/>
            <person name="Zhou S."/>
            <person name="Schwartz D.C."/>
            <person name="Perna N.T."/>
            <person name="Mobley H.L.T."/>
            <person name="Donnenberg M.S."/>
            <person name="Blattner F.R."/>
        </authorList>
    </citation>
    <scope>NUCLEOTIDE SEQUENCE [LARGE SCALE GENOMIC DNA]</scope>
    <source>
        <strain>CFT073 / ATCC 700928 / UPEC</strain>
    </source>
</reference>
<organism>
    <name type="scientific">Escherichia coli O6:H1 (strain CFT073 / ATCC 700928 / UPEC)</name>
    <dbReference type="NCBI Taxonomy" id="199310"/>
    <lineage>
        <taxon>Bacteria</taxon>
        <taxon>Pseudomonadati</taxon>
        <taxon>Pseudomonadota</taxon>
        <taxon>Gammaproteobacteria</taxon>
        <taxon>Enterobacterales</taxon>
        <taxon>Enterobacteriaceae</taxon>
        <taxon>Escherichia</taxon>
    </lineage>
</organism>
<gene>
    <name type="primary">iscA</name>
    <name type="ordered locus">c3053</name>
</gene>
<accession>P0AAC9</accession>
<accession>P36539</accession>
<accession>P77691</accession>
<proteinExistence type="inferred from homology"/>
<feature type="chain" id="PRO_0000076998" description="Iron-binding protein IscA">
    <location>
        <begin position="1"/>
        <end position="107"/>
    </location>
</feature>
<feature type="binding site" evidence="1">
    <location>
        <position position="35"/>
    </location>
    <ligand>
        <name>Fe cation</name>
        <dbReference type="ChEBI" id="CHEBI:24875"/>
    </ligand>
</feature>
<feature type="binding site" evidence="1">
    <location>
        <position position="99"/>
    </location>
    <ligand>
        <name>Fe cation</name>
        <dbReference type="ChEBI" id="CHEBI:24875"/>
    </ligand>
</feature>
<feature type="binding site" evidence="1">
    <location>
        <position position="101"/>
    </location>
    <ligand>
        <name>Fe cation</name>
        <dbReference type="ChEBI" id="CHEBI:24875"/>
    </ligand>
</feature>
<sequence>MSITLSDSAAARVNTFLANRGKGFGLRLGVRTSGCSGMAYVLEFVDEPTPEDIVFEDKGVKVVVDGKSLQFLDGTQLDFVKEGLNEGFKFTNPNVKDECGCGESFHV</sequence>
<evidence type="ECO:0000250" key="1"/>
<evidence type="ECO:0000305" key="2"/>